<accession>Q7A087</accession>
<organism>
    <name type="scientific">Staphylococcus aureus (strain MW2)</name>
    <dbReference type="NCBI Taxonomy" id="196620"/>
    <lineage>
        <taxon>Bacteria</taxon>
        <taxon>Bacillati</taxon>
        <taxon>Bacillota</taxon>
        <taxon>Bacilli</taxon>
        <taxon>Bacillales</taxon>
        <taxon>Staphylococcaceae</taxon>
        <taxon>Staphylococcus</taxon>
    </lineage>
</organism>
<protein>
    <recommendedName>
        <fullName evidence="1">Large ribosomal subunit protein bL17</fullName>
    </recommendedName>
    <alternativeName>
        <fullName evidence="2">50S ribosomal protein L17</fullName>
    </alternativeName>
</protein>
<proteinExistence type="evidence at protein level"/>
<gene>
    <name evidence="1" type="primary">rplQ</name>
    <name type="ordered locus">MW2142</name>
</gene>
<feature type="chain" id="PRO_0000224142" description="Large ribosomal subunit protein bL17">
    <location>
        <begin position="1"/>
        <end position="122"/>
    </location>
</feature>
<comment type="subunit">
    <text evidence="1">Part of the 50S ribosomal subunit. Contacts protein L32.</text>
</comment>
<comment type="similarity">
    <text evidence="1">Belongs to the bacterial ribosomal protein bL17 family.</text>
</comment>
<name>RL17_STAAW</name>
<evidence type="ECO:0000255" key="1">
    <source>
        <dbReference type="HAMAP-Rule" id="MF_01368"/>
    </source>
</evidence>
<evidence type="ECO:0000305" key="2"/>
<dbReference type="EMBL" id="BA000033">
    <property type="protein sequence ID" value="BAB96007.1"/>
    <property type="molecule type" value="Genomic_DNA"/>
</dbReference>
<dbReference type="RefSeq" id="WP_000542274.1">
    <property type="nucleotide sequence ID" value="NC_003923.1"/>
</dbReference>
<dbReference type="PDB" id="8Y36">
    <property type="method" value="EM"/>
    <property type="resolution" value="2.65 A"/>
    <property type="chains" value="L=3-122"/>
</dbReference>
<dbReference type="PDB" id="8Y37">
    <property type="method" value="EM"/>
    <property type="resolution" value="2.53 A"/>
    <property type="chains" value="L=3-122"/>
</dbReference>
<dbReference type="PDB" id="8Y38">
    <property type="method" value="EM"/>
    <property type="resolution" value="2.58 A"/>
    <property type="chains" value="L=3-122"/>
</dbReference>
<dbReference type="PDB" id="8Y39">
    <property type="method" value="EM"/>
    <property type="resolution" value="3.60 A"/>
    <property type="chains" value="L=3-122"/>
</dbReference>
<dbReference type="PDBsum" id="8Y36"/>
<dbReference type="PDBsum" id="8Y37"/>
<dbReference type="PDBsum" id="8Y38"/>
<dbReference type="PDBsum" id="8Y39"/>
<dbReference type="EMDB" id="EMD-38873"/>
<dbReference type="EMDB" id="EMD-38874"/>
<dbReference type="EMDB" id="EMD-38875"/>
<dbReference type="EMDB" id="EMD-38876"/>
<dbReference type="SMR" id="Q7A087"/>
<dbReference type="GeneID" id="98346535"/>
<dbReference type="KEGG" id="sam:MW2142"/>
<dbReference type="HOGENOM" id="CLU_074407_2_2_9"/>
<dbReference type="GO" id="GO:0022625">
    <property type="term" value="C:cytosolic large ribosomal subunit"/>
    <property type="evidence" value="ECO:0007669"/>
    <property type="project" value="TreeGrafter"/>
</dbReference>
<dbReference type="GO" id="GO:0003735">
    <property type="term" value="F:structural constituent of ribosome"/>
    <property type="evidence" value="ECO:0007669"/>
    <property type="project" value="InterPro"/>
</dbReference>
<dbReference type="GO" id="GO:0006412">
    <property type="term" value="P:translation"/>
    <property type="evidence" value="ECO:0007669"/>
    <property type="project" value="UniProtKB-UniRule"/>
</dbReference>
<dbReference type="FunFam" id="3.90.1030.10:FF:000002">
    <property type="entry name" value="50S ribosomal protein L17"/>
    <property type="match status" value="1"/>
</dbReference>
<dbReference type="Gene3D" id="3.90.1030.10">
    <property type="entry name" value="Ribosomal protein L17"/>
    <property type="match status" value="1"/>
</dbReference>
<dbReference type="HAMAP" id="MF_01368">
    <property type="entry name" value="Ribosomal_bL17"/>
    <property type="match status" value="1"/>
</dbReference>
<dbReference type="InterPro" id="IPR000456">
    <property type="entry name" value="Ribosomal_bL17"/>
</dbReference>
<dbReference type="InterPro" id="IPR047859">
    <property type="entry name" value="Ribosomal_bL17_CS"/>
</dbReference>
<dbReference type="InterPro" id="IPR036373">
    <property type="entry name" value="Ribosomal_bL17_sf"/>
</dbReference>
<dbReference type="NCBIfam" id="TIGR00059">
    <property type="entry name" value="L17"/>
    <property type="match status" value="1"/>
</dbReference>
<dbReference type="PANTHER" id="PTHR14413:SF16">
    <property type="entry name" value="LARGE RIBOSOMAL SUBUNIT PROTEIN BL17M"/>
    <property type="match status" value="1"/>
</dbReference>
<dbReference type="PANTHER" id="PTHR14413">
    <property type="entry name" value="RIBOSOMAL PROTEIN L17"/>
    <property type="match status" value="1"/>
</dbReference>
<dbReference type="Pfam" id="PF01196">
    <property type="entry name" value="Ribosomal_L17"/>
    <property type="match status" value="1"/>
</dbReference>
<dbReference type="SUPFAM" id="SSF64263">
    <property type="entry name" value="Prokaryotic ribosomal protein L17"/>
    <property type="match status" value="1"/>
</dbReference>
<dbReference type="PROSITE" id="PS01167">
    <property type="entry name" value="RIBOSOMAL_L17"/>
    <property type="match status" value="1"/>
</dbReference>
<keyword id="KW-0002">3D-structure</keyword>
<keyword id="KW-0687">Ribonucleoprotein</keyword>
<keyword id="KW-0689">Ribosomal protein</keyword>
<sequence length="122" mass="13748">MGYRKLGRTSDQRKAMLRDLATSLIISERIETTEARAKEVRSVVEKLITLGKKGDLASRRNAAKTLRNVEILNEDETTQTALQKLFGEIAERYTERQGGYTRILKQGPRRGDGAESVIIELV</sequence>
<reference key="1">
    <citation type="journal article" date="2002" name="Lancet">
        <title>Genome and virulence determinants of high virulence community-acquired MRSA.</title>
        <authorList>
            <person name="Baba T."/>
            <person name="Takeuchi F."/>
            <person name="Kuroda M."/>
            <person name="Yuzawa H."/>
            <person name="Aoki K."/>
            <person name="Oguchi A."/>
            <person name="Nagai Y."/>
            <person name="Iwama N."/>
            <person name="Asano K."/>
            <person name="Naimi T."/>
            <person name="Kuroda H."/>
            <person name="Cui L."/>
            <person name="Yamamoto K."/>
            <person name="Hiramatsu K."/>
        </authorList>
    </citation>
    <scope>NUCLEOTIDE SEQUENCE [LARGE SCALE GENOMIC DNA]</scope>
    <source>
        <strain>MW2</strain>
    </source>
</reference>